<keyword id="KW-0030">Aminoacyl-tRNA synthetase</keyword>
<keyword id="KW-0067">ATP-binding</keyword>
<keyword id="KW-0963">Cytoplasm</keyword>
<keyword id="KW-0436">Ligase</keyword>
<keyword id="KW-0479">Metal-binding</keyword>
<keyword id="KW-0547">Nucleotide-binding</keyword>
<keyword id="KW-0648">Protein biosynthesis</keyword>
<keyword id="KW-0694">RNA-binding</keyword>
<keyword id="KW-0820">tRNA-binding</keyword>
<keyword id="KW-0862">Zinc</keyword>
<sequence>MSGVNEIRSAFLNYFGKNGHEIVASSPLVPRNDPTLMFTNAGMVQFKNVFTGVEKRANPRAVSSQKCVRAGGKHNDLDNVGYTARHHTFFEMLGNFSFGDYFKDHAIELAWNLITKEYGLAKDRLLVTVFSEDDEAFGLWKKIAGLPDSKIIRIPTSDNFWQMGDTGPCGPCSEIFFDHGDHIFGGPPGSPEEDGDRFIEIWNLVFMQFDQVAPGSRNPLPKPSIDTGMGLERIAAVLQGKHDNYEIDLFQALIRAIADLTGADPQGEQKASLRVIADHLRASSFLIADGVLPSNEGRGYVLRRIMRRAMRHGQLLGAREPLMWRLVWALVREMGQAYPELVRAENLIEETLRLEETRFRKTLERGLGILDEKSNTLKQGDMFDGETAFTLYDTYGFPLDLTQDALRARGISVDIASFTDAMDRQRALARASWTGSGDTAAETVWFGLREKLGATEFLGYETETAEAEVAALVKDGQVVDQLKTGDSGAIVLNQTPFYAESGGQVGDTGVLSADGVRFRVTETQKKAGDLFVHLGTVEEGTIKLATALALNVDHDRRGAIRANHSATHLLHEALRQVLGDHIAQKGSLVAPDRLRFDFMHPKPISAEELRRVEDIANEVVLENDEVTTRLMAVDDARDAGARALFGEKYGDEVRVVVMGKGSRDRGANALGWSVELCGGTHVKRTGDIGLISVTGESAVASGVRRIEALTGRQARQSANAAIATAKQAAAELRTSVDDMPARIAALMDERKKLERELAEARKKLAMGGGGAAGAANGASDVREVGGVKLMARAVEGVEIKDLKSLVDQGKKQLGSGVIALIATSEDGKGSIVVGVTPDLVARFSAVDLVRKASEVLGGKGGGGKPDMAQAGGPDGAKAQQALDAIAAAIAG</sequence>
<organism>
    <name type="scientific">Rhodopseudomonas palustris (strain BisA53)</name>
    <dbReference type="NCBI Taxonomy" id="316055"/>
    <lineage>
        <taxon>Bacteria</taxon>
        <taxon>Pseudomonadati</taxon>
        <taxon>Pseudomonadota</taxon>
        <taxon>Alphaproteobacteria</taxon>
        <taxon>Hyphomicrobiales</taxon>
        <taxon>Nitrobacteraceae</taxon>
        <taxon>Rhodopseudomonas</taxon>
    </lineage>
</organism>
<feature type="chain" id="PRO_0000347757" description="Alanine--tRNA ligase">
    <location>
        <begin position="1"/>
        <end position="891"/>
    </location>
</feature>
<feature type="binding site" evidence="1">
    <location>
        <position position="564"/>
    </location>
    <ligand>
        <name>Zn(2+)</name>
        <dbReference type="ChEBI" id="CHEBI:29105"/>
    </ligand>
</feature>
<feature type="binding site" evidence="1">
    <location>
        <position position="568"/>
    </location>
    <ligand>
        <name>Zn(2+)</name>
        <dbReference type="ChEBI" id="CHEBI:29105"/>
    </ligand>
</feature>
<feature type="binding site" evidence="1">
    <location>
        <position position="677"/>
    </location>
    <ligand>
        <name>Zn(2+)</name>
        <dbReference type="ChEBI" id="CHEBI:29105"/>
    </ligand>
</feature>
<feature type="binding site" evidence="1">
    <location>
        <position position="681"/>
    </location>
    <ligand>
        <name>Zn(2+)</name>
        <dbReference type="ChEBI" id="CHEBI:29105"/>
    </ligand>
</feature>
<accession>Q07R87</accession>
<name>SYA_RHOP5</name>
<reference key="1">
    <citation type="submission" date="2006-09" db="EMBL/GenBank/DDBJ databases">
        <title>Complete sequence of Rhodopseudomonas palustris BisA53.</title>
        <authorList>
            <consortium name="US DOE Joint Genome Institute"/>
            <person name="Copeland A."/>
            <person name="Lucas S."/>
            <person name="Lapidus A."/>
            <person name="Barry K."/>
            <person name="Detter J.C."/>
            <person name="Glavina del Rio T."/>
            <person name="Hammon N."/>
            <person name="Israni S."/>
            <person name="Dalin E."/>
            <person name="Tice H."/>
            <person name="Pitluck S."/>
            <person name="Chain P."/>
            <person name="Malfatti S."/>
            <person name="Shin M."/>
            <person name="Vergez L."/>
            <person name="Schmutz J."/>
            <person name="Larimer F."/>
            <person name="Land M."/>
            <person name="Hauser L."/>
            <person name="Pelletier D.A."/>
            <person name="Kyrpides N."/>
            <person name="Kim E."/>
            <person name="Harwood C.S."/>
            <person name="Oda Y."/>
            <person name="Richardson P."/>
        </authorList>
    </citation>
    <scope>NUCLEOTIDE SEQUENCE [LARGE SCALE GENOMIC DNA]</scope>
    <source>
        <strain>BisA53</strain>
    </source>
</reference>
<gene>
    <name evidence="1" type="primary">alaS</name>
    <name type="ordered locus">RPE_1598</name>
</gene>
<evidence type="ECO:0000255" key="1">
    <source>
        <dbReference type="HAMAP-Rule" id="MF_00036"/>
    </source>
</evidence>
<evidence type="ECO:0000305" key="2"/>
<protein>
    <recommendedName>
        <fullName evidence="1">Alanine--tRNA ligase</fullName>
        <ecNumber evidence="1">6.1.1.7</ecNumber>
    </recommendedName>
    <alternativeName>
        <fullName evidence="1">Alanyl-tRNA synthetase</fullName>
        <shortName evidence="1">AlaRS</shortName>
    </alternativeName>
</protein>
<dbReference type="EC" id="6.1.1.7" evidence="1"/>
<dbReference type="EMBL" id="CP000463">
    <property type="protein sequence ID" value="ABJ05547.1"/>
    <property type="status" value="ALT_INIT"/>
    <property type="molecule type" value="Genomic_DNA"/>
</dbReference>
<dbReference type="SMR" id="Q07R87"/>
<dbReference type="STRING" id="316055.RPE_1598"/>
<dbReference type="KEGG" id="rpe:RPE_1598"/>
<dbReference type="eggNOG" id="COG0013">
    <property type="taxonomic scope" value="Bacteria"/>
</dbReference>
<dbReference type="HOGENOM" id="CLU_004485_1_1_5"/>
<dbReference type="OrthoDB" id="9803884at2"/>
<dbReference type="GO" id="GO:0005829">
    <property type="term" value="C:cytosol"/>
    <property type="evidence" value="ECO:0007669"/>
    <property type="project" value="TreeGrafter"/>
</dbReference>
<dbReference type="GO" id="GO:0004813">
    <property type="term" value="F:alanine-tRNA ligase activity"/>
    <property type="evidence" value="ECO:0007669"/>
    <property type="project" value="UniProtKB-UniRule"/>
</dbReference>
<dbReference type="GO" id="GO:0002161">
    <property type="term" value="F:aminoacyl-tRNA deacylase activity"/>
    <property type="evidence" value="ECO:0007669"/>
    <property type="project" value="TreeGrafter"/>
</dbReference>
<dbReference type="GO" id="GO:0005524">
    <property type="term" value="F:ATP binding"/>
    <property type="evidence" value="ECO:0007669"/>
    <property type="project" value="UniProtKB-UniRule"/>
</dbReference>
<dbReference type="GO" id="GO:0000049">
    <property type="term" value="F:tRNA binding"/>
    <property type="evidence" value="ECO:0007669"/>
    <property type="project" value="UniProtKB-KW"/>
</dbReference>
<dbReference type="GO" id="GO:0008270">
    <property type="term" value="F:zinc ion binding"/>
    <property type="evidence" value="ECO:0007669"/>
    <property type="project" value="UniProtKB-UniRule"/>
</dbReference>
<dbReference type="GO" id="GO:0006419">
    <property type="term" value="P:alanyl-tRNA aminoacylation"/>
    <property type="evidence" value="ECO:0007669"/>
    <property type="project" value="UniProtKB-UniRule"/>
</dbReference>
<dbReference type="GO" id="GO:0045892">
    <property type="term" value="P:negative regulation of DNA-templated transcription"/>
    <property type="evidence" value="ECO:0007669"/>
    <property type="project" value="TreeGrafter"/>
</dbReference>
<dbReference type="CDD" id="cd00673">
    <property type="entry name" value="AlaRS_core"/>
    <property type="match status" value="1"/>
</dbReference>
<dbReference type="FunFam" id="2.40.30.130:FF:000001">
    <property type="entry name" value="Alanine--tRNA ligase"/>
    <property type="match status" value="1"/>
</dbReference>
<dbReference type="FunFam" id="3.10.310.40:FF:000001">
    <property type="entry name" value="Alanine--tRNA ligase"/>
    <property type="match status" value="1"/>
</dbReference>
<dbReference type="FunFam" id="3.30.54.20:FF:000001">
    <property type="entry name" value="Alanine--tRNA ligase"/>
    <property type="match status" value="1"/>
</dbReference>
<dbReference type="FunFam" id="3.30.930.10:FF:000004">
    <property type="entry name" value="Alanine--tRNA ligase"/>
    <property type="match status" value="1"/>
</dbReference>
<dbReference type="FunFam" id="3.30.980.10:FF:000004">
    <property type="entry name" value="Alanine--tRNA ligase, cytoplasmic"/>
    <property type="match status" value="1"/>
</dbReference>
<dbReference type="Gene3D" id="2.40.30.130">
    <property type="match status" value="1"/>
</dbReference>
<dbReference type="Gene3D" id="3.10.310.40">
    <property type="match status" value="1"/>
</dbReference>
<dbReference type="Gene3D" id="3.30.54.20">
    <property type="match status" value="1"/>
</dbReference>
<dbReference type="Gene3D" id="6.10.250.550">
    <property type="match status" value="1"/>
</dbReference>
<dbReference type="Gene3D" id="3.30.930.10">
    <property type="entry name" value="Bira Bifunctional Protein, Domain 2"/>
    <property type="match status" value="1"/>
</dbReference>
<dbReference type="Gene3D" id="3.30.980.10">
    <property type="entry name" value="Threonyl-trna Synthetase, Chain A, domain 2"/>
    <property type="match status" value="1"/>
</dbReference>
<dbReference type="HAMAP" id="MF_00036_B">
    <property type="entry name" value="Ala_tRNA_synth_B"/>
    <property type="match status" value="1"/>
</dbReference>
<dbReference type="InterPro" id="IPR045864">
    <property type="entry name" value="aa-tRNA-synth_II/BPL/LPL"/>
</dbReference>
<dbReference type="InterPro" id="IPR002318">
    <property type="entry name" value="Ala-tRNA-lgiase_IIc"/>
</dbReference>
<dbReference type="InterPro" id="IPR018162">
    <property type="entry name" value="Ala-tRNA-ligase_IIc_anticod-bd"/>
</dbReference>
<dbReference type="InterPro" id="IPR018165">
    <property type="entry name" value="Ala-tRNA-synth_IIc_core"/>
</dbReference>
<dbReference type="InterPro" id="IPR018164">
    <property type="entry name" value="Ala-tRNA-synth_IIc_N"/>
</dbReference>
<dbReference type="InterPro" id="IPR050058">
    <property type="entry name" value="Ala-tRNA_ligase"/>
</dbReference>
<dbReference type="InterPro" id="IPR023033">
    <property type="entry name" value="Ala_tRNA_ligase_euk/bac"/>
</dbReference>
<dbReference type="InterPro" id="IPR003156">
    <property type="entry name" value="DHHA1_dom"/>
</dbReference>
<dbReference type="InterPro" id="IPR018163">
    <property type="entry name" value="Thr/Ala-tRNA-synth_IIc_edit"/>
</dbReference>
<dbReference type="InterPro" id="IPR009000">
    <property type="entry name" value="Transl_B-barrel_sf"/>
</dbReference>
<dbReference type="InterPro" id="IPR012947">
    <property type="entry name" value="tRNA_SAD"/>
</dbReference>
<dbReference type="NCBIfam" id="TIGR00344">
    <property type="entry name" value="alaS"/>
    <property type="match status" value="1"/>
</dbReference>
<dbReference type="PANTHER" id="PTHR11777:SF9">
    <property type="entry name" value="ALANINE--TRNA LIGASE, CYTOPLASMIC"/>
    <property type="match status" value="1"/>
</dbReference>
<dbReference type="PANTHER" id="PTHR11777">
    <property type="entry name" value="ALANYL-TRNA SYNTHETASE"/>
    <property type="match status" value="1"/>
</dbReference>
<dbReference type="Pfam" id="PF02272">
    <property type="entry name" value="DHHA1"/>
    <property type="match status" value="1"/>
</dbReference>
<dbReference type="Pfam" id="PF01411">
    <property type="entry name" value="tRNA-synt_2c"/>
    <property type="match status" value="1"/>
</dbReference>
<dbReference type="Pfam" id="PF07973">
    <property type="entry name" value="tRNA_SAD"/>
    <property type="match status" value="1"/>
</dbReference>
<dbReference type="PRINTS" id="PR00980">
    <property type="entry name" value="TRNASYNTHALA"/>
</dbReference>
<dbReference type="SMART" id="SM00863">
    <property type="entry name" value="tRNA_SAD"/>
    <property type="match status" value="1"/>
</dbReference>
<dbReference type="SUPFAM" id="SSF55681">
    <property type="entry name" value="Class II aaRS and biotin synthetases"/>
    <property type="match status" value="1"/>
</dbReference>
<dbReference type="SUPFAM" id="SSF101353">
    <property type="entry name" value="Putative anticodon-binding domain of alanyl-tRNA synthetase (AlaRS)"/>
    <property type="match status" value="1"/>
</dbReference>
<dbReference type="SUPFAM" id="SSF55186">
    <property type="entry name" value="ThrRS/AlaRS common domain"/>
    <property type="match status" value="1"/>
</dbReference>
<dbReference type="SUPFAM" id="SSF50447">
    <property type="entry name" value="Translation proteins"/>
    <property type="match status" value="1"/>
</dbReference>
<dbReference type="PROSITE" id="PS50860">
    <property type="entry name" value="AA_TRNA_LIGASE_II_ALA"/>
    <property type="match status" value="1"/>
</dbReference>
<comment type="function">
    <text evidence="1">Catalyzes the attachment of alanine to tRNA(Ala) in a two-step reaction: alanine is first activated by ATP to form Ala-AMP and then transferred to the acceptor end of tRNA(Ala). Also edits incorrectly charged Ser-tRNA(Ala) and Gly-tRNA(Ala) via its editing domain.</text>
</comment>
<comment type="catalytic activity">
    <reaction evidence="1">
        <text>tRNA(Ala) + L-alanine + ATP = L-alanyl-tRNA(Ala) + AMP + diphosphate</text>
        <dbReference type="Rhea" id="RHEA:12540"/>
        <dbReference type="Rhea" id="RHEA-COMP:9657"/>
        <dbReference type="Rhea" id="RHEA-COMP:9923"/>
        <dbReference type="ChEBI" id="CHEBI:30616"/>
        <dbReference type="ChEBI" id="CHEBI:33019"/>
        <dbReference type="ChEBI" id="CHEBI:57972"/>
        <dbReference type="ChEBI" id="CHEBI:78442"/>
        <dbReference type="ChEBI" id="CHEBI:78497"/>
        <dbReference type="ChEBI" id="CHEBI:456215"/>
        <dbReference type="EC" id="6.1.1.7"/>
    </reaction>
</comment>
<comment type="cofactor">
    <cofactor evidence="1">
        <name>Zn(2+)</name>
        <dbReference type="ChEBI" id="CHEBI:29105"/>
    </cofactor>
    <text evidence="1">Binds 1 zinc ion per subunit.</text>
</comment>
<comment type="subcellular location">
    <subcellularLocation>
        <location evidence="1">Cytoplasm</location>
    </subcellularLocation>
</comment>
<comment type="domain">
    <text evidence="1">Consists of three domains; the N-terminal catalytic domain, the editing domain and the C-terminal C-Ala domain. The editing domain removes incorrectly charged amino acids, while the C-Ala domain, along with tRNA(Ala), serves as a bridge to cooperatively bring together the editing and aminoacylation centers thus stimulating deacylation of misacylated tRNAs.</text>
</comment>
<comment type="similarity">
    <text evidence="1">Belongs to the class-II aminoacyl-tRNA synthetase family.</text>
</comment>
<comment type="sequence caution" evidence="2">
    <conflict type="erroneous initiation">
        <sequence resource="EMBL-CDS" id="ABJ05547"/>
    </conflict>
</comment>
<proteinExistence type="inferred from homology"/>